<proteinExistence type="evidence at protein level"/>
<reference key="1">
    <citation type="journal article" date="2004" name="Nat. Genet.">
        <title>Complete sequencing and characterization of 21,243 full-length human cDNAs.</title>
        <authorList>
            <person name="Ota T."/>
            <person name="Suzuki Y."/>
            <person name="Nishikawa T."/>
            <person name="Otsuki T."/>
            <person name="Sugiyama T."/>
            <person name="Irie R."/>
            <person name="Wakamatsu A."/>
            <person name="Hayashi K."/>
            <person name="Sato H."/>
            <person name="Nagai K."/>
            <person name="Kimura K."/>
            <person name="Makita H."/>
            <person name="Sekine M."/>
            <person name="Obayashi M."/>
            <person name="Nishi T."/>
            <person name="Shibahara T."/>
            <person name="Tanaka T."/>
            <person name="Ishii S."/>
            <person name="Yamamoto J."/>
            <person name="Saito K."/>
            <person name="Kawai Y."/>
            <person name="Isono Y."/>
            <person name="Nakamura Y."/>
            <person name="Nagahari K."/>
            <person name="Murakami K."/>
            <person name="Yasuda T."/>
            <person name="Iwayanagi T."/>
            <person name="Wagatsuma M."/>
            <person name="Shiratori A."/>
            <person name="Sudo H."/>
            <person name="Hosoiri T."/>
            <person name="Kaku Y."/>
            <person name="Kodaira H."/>
            <person name="Kondo H."/>
            <person name="Sugawara M."/>
            <person name="Takahashi M."/>
            <person name="Kanda K."/>
            <person name="Yokoi T."/>
            <person name="Furuya T."/>
            <person name="Kikkawa E."/>
            <person name="Omura Y."/>
            <person name="Abe K."/>
            <person name="Kamihara K."/>
            <person name="Katsuta N."/>
            <person name="Sato K."/>
            <person name="Tanikawa M."/>
            <person name="Yamazaki M."/>
            <person name="Ninomiya K."/>
            <person name="Ishibashi T."/>
            <person name="Yamashita H."/>
            <person name="Murakawa K."/>
            <person name="Fujimori K."/>
            <person name="Tanai H."/>
            <person name="Kimata M."/>
            <person name="Watanabe M."/>
            <person name="Hiraoka S."/>
            <person name="Chiba Y."/>
            <person name="Ishida S."/>
            <person name="Ono Y."/>
            <person name="Takiguchi S."/>
            <person name="Watanabe S."/>
            <person name="Yosida M."/>
            <person name="Hotuta T."/>
            <person name="Kusano J."/>
            <person name="Kanehori K."/>
            <person name="Takahashi-Fujii A."/>
            <person name="Hara H."/>
            <person name="Tanase T.-O."/>
            <person name="Nomura Y."/>
            <person name="Togiya S."/>
            <person name="Komai F."/>
            <person name="Hara R."/>
            <person name="Takeuchi K."/>
            <person name="Arita M."/>
            <person name="Imose N."/>
            <person name="Musashino K."/>
            <person name="Yuuki H."/>
            <person name="Oshima A."/>
            <person name="Sasaki N."/>
            <person name="Aotsuka S."/>
            <person name="Yoshikawa Y."/>
            <person name="Matsunawa H."/>
            <person name="Ichihara T."/>
            <person name="Shiohata N."/>
            <person name="Sano S."/>
            <person name="Moriya S."/>
            <person name="Momiyama H."/>
            <person name="Satoh N."/>
            <person name="Takami S."/>
            <person name="Terashima Y."/>
            <person name="Suzuki O."/>
            <person name="Nakagawa S."/>
            <person name="Senoh A."/>
            <person name="Mizoguchi H."/>
            <person name="Goto Y."/>
            <person name="Shimizu F."/>
            <person name="Wakebe H."/>
            <person name="Hishigaki H."/>
            <person name="Watanabe T."/>
            <person name="Sugiyama A."/>
            <person name="Takemoto M."/>
            <person name="Kawakami B."/>
            <person name="Yamazaki M."/>
            <person name="Watanabe K."/>
            <person name="Kumagai A."/>
            <person name="Itakura S."/>
            <person name="Fukuzumi Y."/>
            <person name="Fujimori Y."/>
            <person name="Komiyama M."/>
            <person name="Tashiro H."/>
            <person name="Tanigami A."/>
            <person name="Fujiwara T."/>
            <person name="Ono T."/>
            <person name="Yamada K."/>
            <person name="Fujii Y."/>
            <person name="Ozaki K."/>
            <person name="Hirao M."/>
            <person name="Ohmori Y."/>
            <person name="Kawabata A."/>
            <person name="Hikiji T."/>
            <person name="Kobatake N."/>
            <person name="Inagaki H."/>
            <person name="Ikema Y."/>
            <person name="Okamoto S."/>
            <person name="Okitani R."/>
            <person name="Kawakami T."/>
            <person name="Noguchi S."/>
            <person name="Itoh T."/>
            <person name="Shigeta K."/>
            <person name="Senba T."/>
            <person name="Matsumura K."/>
            <person name="Nakajima Y."/>
            <person name="Mizuno T."/>
            <person name="Morinaga M."/>
            <person name="Sasaki M."/>
            <person name="Togashi T."/>
            <person name="Oyama M."/>
            <person name="Hata H."/>
            <person name="Watanabe M."/>
            <person name="Komatsu T."/>
            <person name="Mizushima-Sugano J."/>
            <person name="Satoh T."/>
            <person name="Shirai Y."/>
            <person name="Takahashi Y."/>
            <person name="Nakagawa K."/>
            <person name="Okumura K."/>
            <person name="Nagase T."/>
            <person name="Nomura N."/>
            <person name="Kikuchi H."/>
            <person name="Masuho Y."/>
            <person name="Yamashita R."/>
            <person name="Nakai K."/>
            <person name="Yada T."/>
            <person name="Nakamura Y."/>
            <person name="Ohara O."/>
            <person name="Isogai T."/>
            <person name="Sugano S."/>
        </authorList>
    </citation>
    <scope>NUCLEOTIDE SEQUENCE [LARGE SCALE MRNA] (ISOFORM 1)</scope>
</reference>
<reference key="2">
    <citation type="journal article" date="2004" name="Nature">
        <title>The sequence and analysis of duplication-rich human chromosome 16.</title>
        <authorList>
            <person name="Martin J."/>
            <person name="Han C."/>
            <person name="Gordon L.A."/>
            <person name="Terry A."/>
            <person name="Prabhakar S."/>
            <person name="She X."/>
            <person name="Xie G."/>
            <person name="Hellsten U."/>
            <person name="Chan Y.M."/>
            <person name="Altherr M."/>
            <person name="Couronne O."/>
            <person name="Aerts A."/>
            <person name="Bajorek E."/>
            <person name="Black S."/>
            <person name="Blumer H."/>
            <person name="Branscomb E."/>
            <person name="Brown N.C."/>
            <person name="Bruno W.J."/>
            <person name="Buckingham J.M."/>
            <person name="Callen D.F."/>
            <person name="Campbell C.S."/>
            <person name="Campbell M.L."/>
            <person name="Campbell E.W."/>
            <person name="Caoile C."/>
            <person name="Challacombe J.F."/>
            <person name="Chasteen L.A."/>
            <person name="Chertkov O."/>
            <person name="Chi H.C."/>
            <person name="Christensen M."/>
            <person name="Clark L.M."/>
            <person name="Cohn J.D."/>
            <person name="Denys M."/>
            <person name="Detter J.C."/>
            <person name="Dickson M."/>
            <person name="Dimitrijevic-Bussod M."/>
            <person name="Escobar J."/>
            <person name="Fawcett J.J."/>
            <person name="Flowers D."/>
            <person name="Fotopulos D."/>
            <person name="Glavina T."/>
            <person name="Gomez M."/>
            <person name="Gonzales E."/>
            <person name="Goodstein D."/>
            <person name="Goodwin L.A."/>
            <person name="Grady D.L."/>
            <person name="Grigoriev I."/>
            <person name="Groza M."/>
            <person name="Hammon N."/>
            <person name="Hawkins T."/>
            <person name="Haydu L."/>
            <person name="Hildebrand C.E."/>
            <person name="Huang W."/>
            <person name="Israni S."/>
            <person name="Jett J."/>
            <person name="Jewett P.B."/>
            <person name="Kadner K."/>
            <person name="Kimball H."/>
            <person name="Kobayashi A."/>
            <person name="Krawczyk M.-C."/>
            <person name="Leyba T."/>
            <person name="Longmire J.L."/>
            <person name="Lopez F."/>
            <person name="Lou Y."/>
            <person name="Lowry S."/>
            <person name="Ludeman T."/>
            <person name="Manohar C.F."/>
            <person name="Mark G.A."/>
            <person name="McMurray K.L."/>
            <person name="Meincke L.J."/>
            <person name="Morgan J."/>
            <person name="Moyzis R.K."/>
            <person name="Mundt M.O."/>
            <person name="Munk A.C."/>
            <person name="Nandkeshwar R.D."/>
            <person name="Pitluck S."/>
            <person name="Pollard M."/>
            <person name="Predki P."/>
            <person name="Parson-Quintana B."/>
            <person name="Ramirez L."/>
            <person name="Rash S."/>
            <person name="Retterer J."/>
            <person name="Ricke D.O."/>
            <person name="Robinson D.L."/>
            <person name="Rodriguez A."/>
            <person name="Salamov A."/>
            <person name="Saunders E.H."/>
            <person name="Scott D."/>
            <person name="Shough T."/>
            <person name="Stallings R.L."/>
            <person name="Stalvey M."/>
            <person name="Sutherland R.D."/>
            <person name="Tapia R."/>
            <person name="Tesmer J.G."/>
            <person name="Thayer N."/>
            <person name="Thompson L.S."/>
            <person name="Tice H."/>
            <person name="Torney D.C."/>
            <person name="Tran-Gyamfi M."/>
            <person name="Tsai M."/>
            <person name="Ulanovsky L.E."/>
            <person name="Ustaszewska A."/>
            <person name="Vo N."/>
            <person name="White P.S."/>
            <person name="Williams A.L."/>
            <person name="Wills P.L."/>
            <person name="Wu J.-R."/>
            <person name="Wu K."/>
            <person name="Yang J."/>
            <person name="DeJong P."/>
            <person name="Bruce D."/>
            <person name="Doggett N.A."/>
            <person name="Deaven L."/>
            <person name="Schmutz J."/>
            <person name="Grimwood J."/>
            <person name="Richardson P."/>
            <person name="Rokhsar D.S."/>
            <person name="Eichler E.E."/>
            <person name="Gilna P."/>
            <person name="Lucas S.M."/>
            <person name="Myers R.M."/>
            <person name="Rubin E.M."/>
            <person name="Pennacchio L.A."/>
        </authorList>
    </citation>
    <scope>NUCLEOTIDE SEQUENCE [LARGE SCALE GENOMIC DNA]</scope>
</reference>
<reference key="3">
    <citation type="submission" date="2005-09" db="EMBL/GenBank/DDBJ databases">
        <authorList>
            <person name="Mural R.J."/>
            <person name="Istrail S."/>
            <person name="Sutton G.G."/>
            <person name="Florea L."/>
            <person name="Halpern A.L."/>
            <person name="Mobarry C.M."/>
            <person name="Lippert R."/>
            <person name="Walenz B."/>
            <person name="Shatkay H."/>
            <person name="Dew I."/>
            <person name="Miller J.R."/>
            <person name="Flanigan M.J."/>
            <person name="Edwards N.J."/>
            <person name="Bolanos R."/>
            <person name="Fasulo D."/>
            <person name="Halldorsson B.V."/>
            <person name="Hannenhalli S."/>
            <person name="Turner R."/>
            <person name="Yooseph S."/>
            <person name="Lu F."/>
            <person name="Nusskern D.R."/>
            <person name="Shue B.C."/>
            <person name="Zheng X.H."/>
            <person name="Zhong F."/>
            <person name="Delcher A.L."/>
            <person name="Huson D.H."/>
            <person name="Kravitz S.A."/>
            <person name="Mouchard L."/>
            <person name="Reinert K."/>
            <person name="Remington K.A."/>
            <person name="Clark A.G."/>
            <person name="Waterman M.S."/>
            <person name="Eichler E.E."/>
            <person name="Adams M.D."/>
            <person name="Hunkapiller M.W."/>
            <person name="Myers E.W."/>
            <person name="Venter J.C."/>
        </authorList>
    </citation>
    <scope>NUCLEOTIDE SEQUENCE [LARGE SCALE GENOMIC DNA]</scope>
</reference>
<reference key="4">
    <citation type="journal article" date="2004" name="Genome Res.">
        <title>The status, quality, and expansion of the NIH full-length cDNA project: the Mammalian Gene Collection (MGC).</title>
        <authorList>
            <consortium name="The MGC Project Team"/>
        </authorList>
    </citation>
    <scope>NUCLEOTIDE SEQUENCE [LARGE SCALE MRNA] (ISOFORMS 1 AND 2)</scope>
    <source>
        <tissue>Lung</tissue>
        <tissue>Lymph</tissue>
        <tissue>Skin</tissue>
        <tissue>Testis</tissue>
    </source>
</reference>
<reference key="5">
    <citation type="journal article" date="2008" name="Genes Dev.">
        <title>RMI, a new OB-fold complex essential for Bloom syndrome protein to maintain genome stability.</title>
        <authorList>
            <person name="Xu D."/>
            <person name="Guo R."/>
            <person name="Sobeck A."/>
            <person name="Bachrati C.Z."/>
            <person name="Yang J."/>
            <person name="Enomoto T."/>
            <person name="Brown G.W."/>
            <person name="Hoatlin M.E."/>
            <person name="Hickson I.D."/>
            <person name="Wang W."/>
        </authorList>
    </citation>
    <scope>FUNCTION</scope>
    <scope>IDENTIFICATION IN THE RMI COMPLEX</scope>
    <scope>SUBCELLULAR LOCATION</scope>
    <scope>MUTAGENESIS OF LYS-121</scope>
</reference>
<reference key="6">
    <citation type="journal article" date="2008" name="Genes Dev.">
        <title>BLAP18/RMI2, a novel OB-fold-containing protein, is an essential component of the Bloom helicase-double Holliday junction dissolvasome.</title>
        <authorList>
            <person name="Singh T.R."/>
            <person name="Ali A.M."/>
            <person name="Busygina V."/>
            <person name="Raynard S."/>
            <person name="Fan Q."/>
            <person name="Du C.-H."/>
            <person name="Andreassen P.R."/>
            <person name="Sung P."/>
            <person name="Meetei A.R."/>
        </authorList>
    </citation>
    <scope>FUNCTION</scope>
    <scope>IDENTIFICATION IN THE RMI COMPLEX</scope>
    <scope>IDENTIFICATION BY MASS SPECTROMETRY</scope>
    <scope>PHOSPHORYLATION</scope>
    <scope>MUTAGENESIS OF LYS-24; TRP-59; LYS-100; LYS-121 AND TRP-135</scope>
</reference>
<reference key="7">
    <citation type="journal article" date="2010" name="Sci. Signal.">
        <title>Quantitative phosphoproteomics reveals widespread full phosphorylation site occupancy during mitosis.</title>
        <authorList>
            <person name="Olsen J.V."/>
            <person name="Vermeulen M."/>
            <person name="Santamaria A."/>
            <person name="Kumar C."/>
            <person name="Miller M.L."/>
            <person name="Jensen L.J."/>
            <person name="Gnad F."/>
            <person name="Cox J."/>
            <person name="Jensen T.S."/>
            <person name="Nigg E.A."/>
            <person name="Brunak S."/>
            <person name="Mann M."/>
        </authorList>
    </citation>
    <scope>ACETYLATION [LARGE SCALE ANALYSIS] AT ALA-2</scope>
    <scope>PHOSPHORYLATION [LARGE SCALE ANALYSIS] AT SER-7</scope>
    <scope>CLEAVAGE OF INITIATOR METHIONINE [LARGE SCALE ANALYSIS]</scope>
    <scope>IDENTIFICATION BY MASS SPECTROMETRY [LARGE SCALE ANALYSIS]</scope>
    <source>
        <tissue>Cervix carcinoma</tissue>
    </source>
</reference>
<reference key="8">
    <citation type="journal article" date="2012" name="Proc. Natl. Acad. Sci. U.S.A.">
        <title>N-terminal acetylome analyses and functional insights of the N-terminal acetyltransferase NatB.</title>
        <authorList>
            <person name="Van Damme P."/>
            <person name="Lasa M."/>
            <person name="Polevoda B."/>
            <person name="Gazquez C."/>
            <person name="Elosegui-Artola A."/>
            <person name="Kim D.S."/>
            <person name="De Juan-Pardo E."/>
            <person name="Demeyer K."/>
            <person name="Hole K."/>
            <person name="Larrea E."/>
            <person name="Timmerman E."/>
            <person name="Prieto J."/>
            <person name="Arnesen T."/>
            <person name="Sherman F."/>
            <person name="Gevaert K."/>
            <person name="Aldabe R."/>
        </authorList>
    </citation>
    <scope>ACETYLATION [LARGE SCALE ANALYSIS] AT ALA-2</scope>
    <scope>CLEAVAGE OF INITIATOR METHIONINE [LARGE SCALE ANALYSIS]</scope>
    <scope>IDENTIFICATION BY MASS SPECTROMETRY [LARGE SCALE ANALYSIS]</scope>
</reference>
<reference key="9">
    <citation type="journal article" date="2013" name="J. Proteome Res.">
        <title>Toward a comprehensive characterization of a human cancer cell phosphoproteome.</title>
        <authorList>
            <person name="Zhou H."/>
            <person name="Di Palma S."/>
            <person name="Preisinger C."/>
            <person name="Peng M."/>
            <person name="Polat A.N."/>
            <person name="Heck A.J."/>
            <person name="Mohammed S."/>
        </authorList>
    </citation>
    <scope>PHOSPHORYLATION [LARGE SCALE ANALYSIS] AT SER-7</scope>
    <scope>IDENTIFICATION BY MASS SPECTROMETRY [LARGE SCALE ANALYSIS]</scope>
    <source>
        <tissue>Cervix carcinoma</tissue>
        <tissue>Erythroleukemia</tissue>
    </source>
</reference>
<reference key="10">
    <citation type="journal article" date="2016" name="PLoS Genet.">
        <title>Loss of RMI2 increases genome instability and causes a Bloom-like syndrome.</title>
        <authorList>
            <person name="Hudson D.F."/>
            <person name="Amor D.J."/>
            <person name="Boys A."/>
            <person name="Butler K."/>
            <person name="Williams L."/>
            <person name="Zhang T."/>
            <person name="Kalitsis P."/>
        </authorList>
    </citation>
    <scope>FUNCTION</scope>
    <scope>PROBABLE INVOLVEMENT IN BLOOM-LIKE SYNDROME</scope>
</reference>
<protein>
    <recommendedName>
        <fullName>RecQ-mediated genome instability protein 2</fullName>
        <shortName>hRMI2</shortName>
    </recommendedName>
    <alternativeName>
        <fullName>BLM-associated protein of 18 kDa</fullName>
        <shortName>BLAP18</shortName>
    </alternativeName>
</protein>
<comment type="function">
    <text evidence="2 3 4">Essential component of the RMI complex, a complex that plays an important role in the processing of homologous recombination intermediates. It is required to regulate sister chromatid segregation and to limit DNA crossover. Essential for the stability, localization, and function of BLM, TOP3A, and complexes containing BLM. In the RMI complex, it is required to target BLM to chromatin and stress-induced nuclear foci and mitotic phosphorylation of BLM.</text>
</comment>
<comment type="subunit">
    <text evidence="2 3">Component of the RMI complex, containing at least TOP3A, RMI1 and RMI2. The RMI complex interacts with BLM.</text>
</comment>
<comment type="interaction">
    <interactant intactId="EBI-2555534">
        <id>Q96E14</id>
    </interactant>
    <interactant intactId="EBI-621339">
        <id>Q9H9A7</id>
        <label>RMI1</label>
    </interactant>
    <organismsDiffer>false</organismsDiffer>
    <experiments>5</experiments>
</comment>
<comment type="interaction">
    <interactant intactId="EBI-15876491">
        <id>Q96E14-1</id>
    </interactant>
    <interactant intactId="EBI-621339">
        <id>Q9H9A7</id>
        <label>RMI1</label>
    </interactant>
    <organismsDiffer>false</organismsDiffer>
    <experiments>13</experiments>
</comment>
<comment type="subcellular location">
    <subcellularLocation>
        <location evidence="2">Nucleus</location>
    </subcellularLocation>
    <text>Colocalizes with BLM at nuclear DNA repair foci.</text>
</comment>
<comment type="alternative products">
    <event type="alternative splicing"/>
    <isoform>
        <id>Q96E14-1</id>
        <name>1</name>
        <sequence type="displayed"/>
    </isoform>
    <isoform>
        <id>Q96E14-2</id>
        <name>2</name>
        <sequence type="described" ref="VSP_027287"/>
    </isoform>
</comment>
<comment type="PTM">
    <text evidence="3">Phosphorylated during mitosis.</text>
</comment>
<comment type="disease">
    <text evidence="4">A homozygous deletion of RMI2 has been found in a family with a Bloom-like syndrome and is probable responsible for the phenotype. Patients manifest depigmented skin lesions, multiple cafe-au-lait macules, and growth deficiency. Cells from affected individuals show a high rate of sister chromatid exchange and increased chromosomal breaks.</text>
</comment>
<comment type="similarity">
    <text evidence="6">Belongs to the RMI2 family.</text>
</comment>
<feature type="initiator methionine" description="Removed" evidence="7 8">
    <location>
        <position position="1"/>
    </location>
</feature>
<feature type="chain" id="PRO_0000297577" description="RecQ-mediated genome instability protein 2">
    <location>
        <begin position="2"/>
        <end position="147"/>
    </location>
</feature>
<feature type="DNA-binding region" description="OB">
    <location>
        <begin position="44"/>
        <end position="114"/>
    </location>
</feature>
<feature type="region of interest" description="Disordered" evidence="1">
    <location>
        <begin position="1"/>
        <end position="20"/>
    </location>
</feature>
<feature type="modified residue" description="N-acetylalanine" evidence="7 8">
    <location>
        <position position="2"/>
    </location>
</feature>
<feature type="modified residue" description="Phosphoserine" evidence="7 9">
    <location>
        <position position="7"/>
    </location>
</feature>
<feature type="splice variant" id="VSP_027287" description="In isoform 2." evidence="5">
    <original>MAAAADSFSGGPAGVRLPRSPPLKVLAEQLRRDAEGGPGAWRLSRAAAGRGPLDLAAVWMQGRVVMADRGEARLRDPSGDFSVRGLERVPRGRPCLVP</original>
    <variation>MKQTQVGSLFSLGIRNPEPGPVSGTAVPRQLAWKS</variation>
    <location>
        <begin position="1"/>
        <end position="98"/>
    </location>
</feature>
<feature type="mutagenesis site" description="Abolishes interaction with RMI1, TOP3A and BLM." evidence="3">
    <original>K</original>
    <variation>A</variation>
    <location>
        <position position="24"/>
    </location>
</feature>
<feature type="mutagenesis site" description="According to PubMed:18923083, abolishes interaction with RMI1, TOP3A and BLM. According to PubMed:18923082, does not affect interaction with RMI1 and TOP3A." evidence="3">
    <original>W</original>
    <variation>A</variation>
    <location>
        <position position="59"/>
    </location>
</feature>
<feature type="mutagenesis site" description="Does not affect interaction with RMI1, TOP3A and BLM." evidence="3">
    <original>K</original>
    <variation>A</variation>
    <location>
        <position position="100"/>
    </location>
</feature>
<feature type="mutagenesis site" description="According to PubMed:18923083, does not affect interaction with RMI1, TOP3A and BLM. According to PubMed:18923082, affects interaction with BLM and the BMI complex." evidence="2 3">
    <original>K</original>
    <variation>A</variation>
    <location>
        <position position="121"/>
    </location>
</feature>
<feature type="mutagenesis site" description="Abolishes interaction with RMI1, TOP3A and BLM." evidence="3">
    <original>W</original>
    <variation>A</variation>
    <location>
        <position position="135"/>
    </location>
</feature>
<feature type="helix" evidence="10">
    <location>
        <begin position="27"/>
        <end position="33"/>
    </location>
</feature>
<feature type="strand" evidence="10">
    <location>
        <begin position="34"/>
        <end position="36"/>
    </location>
</feature>
<feature type="strand" evidence="11">
    <location>
        <begin position="40"/>
        <end position="43"/>
    </location>
</feature>
<feature type="turn" evidence="10">
    <location>
        <begin position="46"/>
        <end position="49"/>
    </location>
</feature>
<feature type="strand" evidence="10">
    <location>
        <begin position="56"/>
        <end position="68"/>
    </location>
</feature>
<feature type="strand" evidence="10">
    <location>
        <begin position="71"/>
        <end position="76"/>
    </location>
</feature>
<feature type="strand" evidence="10">
    <location>
        <begin position="79"/>
        <end position="84"/>
    </location>
</feature>
<feature type="helix" evidence="10">
    <location>
        <begin position="86"/>
        <end position="88"/>
    </location>
</feature>
<feature type="strand" evidence="12">
    <location>
        <begin position="92"/>
        <end position="94"/>
    </location>
</feature>
<feature type="strand" evidence="10">
    <location>
        <begin position="101"/>
        <end position="110"/>
    </location>
</feature>
<feature type="strand" evidence="10">
    <location>
        <begin position="112"/>
        <end position="114"/>
    </location>
</feature>
<feature type="strand" evidence="10">
    <location>
        <begin position="116"/>
        <end position="124"/>
    </location>
</feature>
<feature type="helix" evidence="10">
    <location>
        <begin position="130"/>
        <end position="143"/>
    </location>
</feature>
<sequence length="147" mass="15865">MAAAADSFSGGPAGVRLPRSPPLKVLAEQLRRDAEGGPGAWRLSRAAAGRGPLDLAAVWMQGRVVMADRGEARLRDPSGDFSVRGLERVPRGRPCLVPGKYVMVMGVVQACSPEPCLQAVKMTDLSDNPIHESMWELEVEDLHRNIP</sequence>
<evidence type="ECO:0000256" key="1">
    <source>
        <dbReference type="SAM" id="MobiDB-lite"/>
    </source>
</evidence>
<evidence type="ECO:0000269" key="2">
    <source>
    </source>
</evidence>
<evidence type="ECO:0000269" key="3">
    <source>
    </source>
</evidence>
<evidence type="ECO:0000269" key="4">
    <source>
    </source>
</evidence>
<evidence type="ECO:0000303" key="5">
    <source>
    </source>
</evidence>
<evidence type="ECO:0000305" key="6"/>
<evidence type="ECO:0007744" key="7">
    <source>
    </source>
</evidence>
<evidence type="ECO:0007744" key="8">
    <source>
    </source>
</evidence>
<evidence type="ECO:0007744" key="9">
    <source>
    </source>
</evidence>
<evidence type="ECO:0007829" key="10">
    <source>
        <dbReference type="PDB" id="3MXN"/>
    </source>
</evidence>
<evidence type="ECO:0007829" key="11">
    <source>
        <dbReference type="PDB" id="3NBH"/>
    </source>
</evidence>
<evidence type="ECO:0007829" key="12">
    <source>
        <dbReference type="PDB" id="4DAY"/>
    </source>
</evidence>
<name>RMI2_HUMAN</name>
<dbReference type="EMBL" id="AK123764">
    <property type="protein sequence ID" value="BAG53958.1"/>
    <property type="molecule type" value="mRNA"/>
</dbReference>
<dbReference type="EMBL" id="AC009121">
    <property type="status" value="NOT_ANNOTATED_CDS"/>
    <property type="molecule type" value="Genomic_DNA"/>
</dbReference>
<dbReference type="EMBL" id="CH471112">
    <property type="protein sequence ID" value="EAW85155.1"/>
    <property type="molecule type" value="Genomic_DNA"/>
</dbReference>
<dbReference type="EMBL" id="BC013040">
    <property type="protein sequence ID" value="AAH13040.2"/>
    <property type="molecule type" value="mRNA"/>
</dbReference>
<dbReference type="EMBL" id="BC022427">
    <property type="protein sequence ID" value="AAH22427.1"/>
    <property type="molecule type" value="mRNA"/>
</dbReference>
<dbReference type="EMBL" id="BC031016">
    <property type="protein sequence ID" value="AAH31016.1"/>
    <property type="molecule type" value="mRNA"/>
</dbReference>
<dbReference type="EMBL" id="BC039361">
    <property type="protein sequence ID" value="AAH39361.1"/>
    <property type="molecule type" value="mRNA"/>
</dbReference>
<dbReference type="CCDS" id="CCDS10548.1">
    <molecule id="Q96E14-1"/>
</dbReference>
<dbReference type="RefSeq" id="NP_689521.1">
    <molecule id="Q96E14-1"/>
    <property type="nucleotide sequence ID" value="NM_152308.3"/>
</dbReference>
<dbReference type="PDB" id="3MXN">
    <property type="method" value="X-ray"/>
    <property type="resolution" value="1.55 A"/>
    <property type="chains" value="B=1-147"/>
</dbReference>
<dbReference type="PDB" id="3NBH">
    <property type="method" value="X-ray"/>
    <property type="resolution" value="2.00 A"/>
    <property type="chains" value="B=6-147"/>
</dbReference>
<dbReference type="PDB" id="4DAY">
    <property type="method" value="X-ray"/>
    <property type="resolution" value="3.30 A"/>
    <property type="chains" value="B=1-147"/>
</dbReference>
<dbReference type="PDBsum" id="3MXN"/>
<dbReference type="PDBsum" id="3NBH"/>
<dbReference type="PDBsum" id="4DAY"/>
<dbReference type="SMR" id="Q96E14"/>
<dbReference type="BioGRID" id="125466">
    <property type="interactions" value="32"/>
</dbReference>
<dbReference type="ComplexPortal" id="CPX-3301">
    <property type="entry name" value="BTR double Holliday Junction dissolution complex"/>
</dbReference>
<dbReference type="DIP" id="DIP-56480N"/>
<dbReference type="FunCoup" id="Q96E14">
    <property type="interactions" value="2072"/>
</dbReference>
<dbReference type="IntAct" id="Q96E14">
    <property type="interactions" value="13"/>
</dbReference>
<dbReference type="MINT" id="Q96E14"/>
<dbReference type="STRING" id="9606.ENSP00000310356"/>
<dbReference type="iPTMnet" id="Q96E14"/>
<dbReference type="PhosphoSitePlus" id="Q96E14"/>
<dbReference type="BioMuta" id="RMI2"/>
<dbReference type="DMDM" id="74731517"/>
<dbReference type="jPOST" id="Q96E14"/>
<dbReference type="MassIVE" id="Q96E14"/>
<dbReference type="PaxDb" id="9606-ENSP00000310356"/>
<dbReference type="PeptideAtlas" id="Q96E14"/>
<dbReference type="ProteomicsDB" id="76362">
    <molecule id="Q96E14-1"/>
</dbReference>
<dbReference type="ProteomicsDB" id="76363">
    <molecule id="Q96E14-2"/>
</dbReference>
<dbReference type="Pumba" id="Q96E14"/>
<dbReference type="Antibodypedia" id="52376">
    <property type="antibodies" value="40 antibodies from 15 providers"/>
</dbReference>
<dbReference type="DNASU" id="116028"/>
<dbReference type="Ensembl" id="ENST00000312499.6">
    <molecule id="Q96E14-1"/>
    <property type="protein sequence ID" value="ENSP00000310356.5"/>
    <property type="gene ID" value="ENSG00000175643.10"/>
</dbReference>
<dbReference type="Ensembl" id="ENST00000572173.1">
    <molecule id="Q96E14-2"/>
    <property type="protein sequence ID" value="ENSP00000461206.1"/>
    <property type="gene ID" value="ENSG00000175643.10"/>
</dbReference>
<dbReference type="GeneID" id="116028"/>
<dbReference type="KEGG" id="hsa:116028"/>
<dbReference type="MANE-Select" id="ENST00000312499.6">
    <property type="protein sequence ID" value="ENSP00000310356.5"/>
    <property type="RefSeq nucleotide sequence ID" value="NM_152308.3"/>
    <property type="RefSeq protein sequence ID" value="NP_689521.1"/>
</dbReference>
<dbReference type="UCSC" id="uc002daw.2">
    <molecule id="Q96E14-1"/>
    <property type="organism name" value="human"/>
</dbReference>
<dbReference type="AGR" id="HGNC:28349"/>
<dbReference type="CTD" id="116028"/>
<dbReference type="DisGeNET" id="116028"/>
<dbReference type="GeneCards" id="RMI2"/>
<dbReference type="HGNC" id="HGNC:28349">
    <property type="gene designation" value="RMI2"/>
</dbReference>
<dbReference type="HPA" id="ENSG00000175643">
    <property type="expression patterns" value="Tissue enhanced (lymphoid)"/>
</dbReference>
<dbReference type="MalaCards" id="RMI2"/>
<dbReference type="MIM" id="612426">
    <property type="type" value="gene"/>
</dbReference>
<dbReference type="neXtProt" id="NX_Q96E14"/>
<dbReference type="OpenTargets" id="ENSG00000175643"/>
<dbReference type="Orphanet" id="508512">
    <property type="disease" value="Intrauterine growth restriction-congenital multiple cafe-au-lait macules-increased sister chromatid exchange syndrome"/>
</dbReference>
<dbReference type="PharmGKB" id="PA145149635"/>
<dbReference type="VEuPathDB" id="HostDB:ENSG00000175643"/>
<dbReference type="eggNOG" id="ENOG502S4AN">
    <property type="taxonomic scope" value="Eukaryota"/>
</dbReference>
<dbReference type="GeneTree" id="ENSGT00390000001653"/>
<dbReference type="HOGENOM" id="CLU_2526905_0_0_1"/>
<dbReference type="InParanoid" id="Q96E14"/>
<dbReference type="OMA" id="RVSLVWM"/>
<dbReference type="OrthoDB" id="9520884at2759"/>
<dbReference type="PAN-GO" id="Q96E14">
    <property type="GO annotations" value="6 GO annotations based on evolutionary models"/>
</dbReference>
<dbReference type="PhylomeDB" id="Q96E14"/>
<dbReference type="TreeFam" id="TF332971"/>
<dbReference type="PathwayCommons" id="Q96E14"/>
<dbReference type="Reactome" id="R-HSA-5685938">
    <property type="pathway name" value="HDR through Single Strand Annealing (SSA)"/>
</dbReference>
<dbReference type="Reactome" id="R-HSA-5685942">
    <property type="pathway name" value="HDR through Homologous Recombination (HRR)"/>
</dbReference>
<dbReference type="Reactome" id="R-HSA-5693554">
    <property type="pathway name" value="Resolution of D-loop Structures through Synthesis-Dependent Strand Annealing (SDSA)"/>
</dbReference>
<dbReference type="Reactome" id="R-HSA-5693568">
    <property type="pathway name" value="Resolution of D-loop Structures through Holliday Junction Intermediates"/>
</dbReference>
<dbReference type="Reactome" id="R-HSA-5693579">
    <property type="pathway name" value="Homologous DNA Pairing and Strand Exchange"/>
</dbReference>
<dbReference type="Reactome" id="R-HSA-5693607">
    <property type="pathway name" value="Processing of DNA double-strand break ends"/>
</dbReference>
<dbReference type="Reactome" id="R-HSA-5693616">
    <property type="pathway name" value="Presynaptic phase of homologous DNA pairing and strand exchange"/>
</dbReference>
<dbReference type="Reactome" id="R-HSA-6804756">
    <property type="pathway name" value="Regulation of TP53 Activity through Phosphorylation"/>
</dbReference>
<dbReference type="Reactome" id="R-HSA-69473">
    <property type="pathway name" value="G2/M DNA damage checkpoint"/>
</dbReference>
<dbReference type="Reactome" id="R-HSA-9701192">
    <property type="pathway name" value="Defective homologous recombination repair (HRR) due to BRCA1 loss of function"/>
</dbReference>
<dbReference type="Reactome" id="R-HSA-9704331">
    <property type="pathway name" value="Defective HDR through Homologous Recombination Repair (HRR) due to PALB2 loss of BRCA1 binding function"/>
</dbReference>
<dbReference type="Reactome" id="R-HSA-9704646">
    <property type="pathway name" value="Defective HDR through Homologous Recombination Repair (HRR) due to PALB2 loss of BRCA2/RAD51/RAD51C binding function"/>
</dbReference>
<dbReference type="Reactome" id="R-HSA-9709570">
    <property type="pathway name" value="Impaired BRCA2 binding to RAD51"/>
</dbReference>
<dbReference type="Reactome" id="R-HSA-9709603">
    <property type="pathway name" value="Impaired BRCA2 binding to PALB2"/>
</dbReference>
<dbReference type="SignaLink" id="Q96E14"/>
<dbReference type="BioGRID-ORCS" id="116028">
    <property type="hits" value="81 hits in 1170 CRISPR screens"/>
</dbReference>
<dbReference type="EvolutionaryTrace" id="Q96E14"/>
<dbReference type="GenomeRNAi" id="116028"/>
<dbReference type="Pharos" id="Q96E14">
    <property type="development level" value="Tbio"/>
</dbReference>
<dbReference type="PRO" id="PR:Q96E14"/>
<dbReference type="Proteomes" id="UP000005640">
    <property type="component" value="Chromosome 16"/>
</dbReference>
<dbReference type="RNAct" id="Q96E14">
    <property type="molecule type" value="protein"/>
</dbReference>
<dbReference type="Bgee" id="ENSG00000175643">
    <property type="expression patterns" value="Expressed in ventricular zone and 129 other cell types or tissues"/>
</dbReference>
<dbReference type="ExpressionAtlas" id="Q96E14">
    <property type="expression patterns" value="baseline and differential"/>
</dbReference>
<dbReference type="GO" id="GO:0005829">
    <property type="term" value="C:cytosol"/>
    <property type="evidence" value="ECO:0000314"/>
    <property type="project" value="HPA"/>
</dbReference>
<dbReference type="GO" id="GO:0016607">
    <property type="term" value="C:nuclear speck"/>
    <property type="evidence" value="ECO:0000314"/>
    <property type="project" value="HPA"/>
</dbReference>
<dbReference type="GO" id="GO:0005654">
    <property type="term" value="C:nucleoplasm"/>
    <property type="evidence" value="ECO:0000304"/>
    <property type="project" value="Reactome"/>
</dbReference>
<dbReference type="GO" id="GO:0005634">
    <property type="term" value="C:nucleus"/>
    <property type="evidence" value="ECO:0000303"/>
    <property type="project" value="ComplexPortal"/>
</dbReference>
<dbReference type="GO" id="GO:0031422">
    <property type="term" value="C:RecQ family helicase-topoisomerase III complex"/>
    <property type="evidence" value="ECO:0000353"/>
    <property type="project" value="ComplexPortal"/>
</dbReference>
<dbReference type="GO" id="GO:0003677">
    <property type="term" value="F:DNA binding"/>
    <property type="evidence" value="ECO:0007669"/>
    <property type="project" value="UniProtKB-KW"/>
</dbReference>
<dbReference type="GO" id="GO:0006281">
    <property type="term" value="P:DNA repair"/>
    <property type="evidence" value="ECO:0000318"/>
    <property type="project" value="GO_Central"/>
</dbReference>
<dbReference type="GO" id="GO:0006260">
    <property type="term" value="P:DNA replication"/>
    <property type="evidence" value="ECO:0007669"/>
    <property type="project" value="UniProtKB-KW"/>
</dbReference>
<dbReference type="GO" id="GO:0000724">
    <property type="term" value="P:double-strand break repair via homologous recombination"/>
    <property type="evidence" value="ECO:0000314"/>
    <property type="project" value="ComplexPortal"/>
</dbReference>
<dbReference type="GO" id="GO:0043007">
    <property type="term" value="P:maintenance of rDNA"/>
    <property type="evidence" value="ECO:0000318"/>
    <property type="project" value="GO_Central"/>
</dbReference>
<dbReference type="GO" id="GO:2000042">
    <property type="term" value="P:negative regulation of double-strand break repair via homologous recombination"/>
    <property type="evidence" value="ECO:0000318"/>
    <property type="project" value="GO_Central"/>
</dbReference>
<dbReference type="GO" id="GO:0033045">
    <property type="term" value="P:regulation of sister chromatid segregation"/>
    <property type="evidence" value="ECO:0000315"/>
    <property type="project" value="UniProtKB"/>
</dbReference>
<dbReference type="GO" id="GO:0071139">
    <property type="term" value="P:resolution of DNA recombination intermediates"/>
    <property type="evidence" value="ECO:0000314"/>
    <property type="project" value="ComplexPortal"/>
</dbReference>
<dbReference type="DisProt" id="DP02895"/>
<dbReference type="FunFam" id="2.40.50.140:FF:000224">
    <property type="entry name" value="RecQ mediated genome instability 2"/>
    <property type="match status" value="1"/>
</dbReference>
<dbReference type="Gene3D" id="2.40.50.140">
    <property type="entry name" value="Nucleic acid-binding proteins"/>
    <property type="match status" value="1"/>
</dbReference>
<dbReference type="IDEAL" id="IID00419"/>
<dbReference type="InterPro" id="IPR012340">
    <property type="entry name" value="NA-bd_OB-fold"/>
</dbReference>
<dbReference type="InterPro" id="IPR032245">
    <property type="entry name" value="RMI2"/>
</dbReference>
<dbReference type="PANTHER" id="PTHR33962:SF1">
    <property type="entry name" value="RECQ-MEDIATED GENOME INSTABILITY PROTEIN 2"/>
    <property type="match status" value="1"/>
</dbReference>
<dbReference type="PANTHER" id="PTHR33962">
    <property type="entry name" value="RECQ-MEDIATED GENOME INSTABILITY PROTEIN 2 RMI2"/>
    <property type="match status" value="1"/>
</dbReference>
<dbReference type="Pfam" id="PF16100">
    <property type="entry name" value="RMI2"/>
    <property type="match status" value="1"/>
</dbReference>
<organism>
    <name type="scientific">Homo sapiens</name>
    <name type="common">Human</name>
    <dbReference type="NCBI Taxonomy" id="9606"/>
    <lineage>
        <taxon>Eukaryota</taxon>
        <taxon>Metazoa</taxon>
        <taxon>Chordata</taxon>
        <taxon>Craniata</taxon>
        <taxon>Vertebrata</taxon>
        <taxon>Euteleostomi</taxon>
        <taxon>Mammalia</taxon>
        <taxon>Eutheria</taxon>
        <taxon>Euarchontoglires</taxon>
        <taxon>Primates</taxon>
        <taxon>Haplorrhini</taxon>
        <taxon>Catarrhini</taxon>
        <taxon>Hominidae</taxon>
        <taxon>Homo</taxon>
    </lineage>
</organism>
<keyword id="KW-0002">3D-structure</keyword>
<keyword id="KW-0007">Acetylation</keyword>
<keyword id="KW-0025">Alternative splicing</keyword>
<keyword id="KW-0235">DNA replication</keyword>
<keyword id="KW-0238">DNA-binding</keyword>
<keyword id="KW-0539">Nucleus</keyword>
<keyword id="KW-0597">Phosphoprotein</keyword>
<keyword id="KW-1267">Proteomics identification</keyword>
<keyword id="KW-1185">Reference proteome</keyword>
<gene>
    <name type="primary">RMI2</name>
    <name type="synonym">C16orf75</name>
</gene>
<accession>Q96E14</accession>
<accession>B3KVZ6</accession>
<accession>Q49AE2</accession>
<accession>Q8TBL0</accession>